<evidence type="ECO:0000255" key="1">
    <source>
        <dbReference type="HAMAP-Rule" id="MF_00145"/>
    </source>
</evidence>
<protein>
    <recommendedName>
        <fullName evidence="1">Phosphoglycerate kinase</fullName>
        <ecNumber evidence="1">2.7.2.3</ecNumber>
    </recommendedName>
</protein>
<accession>B9KZ66</accession>
<gene>
    <name evidence="1" type="primary">pgk</name>
    <name type="ordered locus">trd_0779</name>
</gene>
<dbReference type="EC" id="2.7.2.3" evidence="1"/>
<dbReference type="EMBL" id="CP001275">
    <property type="protein sequence ID" value="ACM06324.1"/>
    <property type="molecule type" value="Genomic_DNA"/>
</dbReference>
<dbReference type="SMR" id="B9KZ66"/>
<dbReference type="STRING" id="309801.trd_0779"/>
<dbReference type="KEGG" id="tro:trd_0779"/>
<dbReference type="eggNOG" id="COG0126">
    <property type="taxonomic scope" value="Bacteria"/>
</dbReference>
<dbReference type="HOGENOM" id="CLU_025427_0_2_0"/>
<dbReference type="OrthoDB" id="9808460at2"/>
<dbReference type="UniPathway" id="UPA00109">
    <property type="reaction ID" value="UER00185"/>
</dbReference>
<dbReference type="Proteomes" id="UP000000447">
    <property type="component" value="Chromosome"/>
</dbReference>
<dbReference type="GO" id="GO:0005829">
    <property type="term" value="C:cytosol"/>
    <property type="evidence" value="ECO:0007669"/>
    <property type="project" value="TreeGrafter"/>
</dbReference>
<dbReference type="GO" id="GO:0043531">
    <property type="term" value="F:ADP binding"/>
    <property type="evidence" value="ECO:0007669"/>
    <property type="project" value="TreeGrafter"/>
</dbReference>
<dbReference type="GO" id="GO:0005524">
    <property type="term" value="F:ATP binding"/>
    <property type="evidence" value="ECO:0007669"/>
    <property type="project" value="UniProtKB-KW"/>
</dbReference>
<dbReference type="GO" id="GO:0004618">
    <property type="term" value="F:phosphoglycerate kinase activity"/>
    <property type="evidence" value="ECO:0007669"/>
    <property type="project" value="UniProtKB-UniRule"/>
</dbReference>
<dbReference type="GO" id="GO:0006094">
    <property type="term" value="P:gluconeogenesis"/>
    <property type="evidence" value="ECO:0007669"/>
    <property type="project" value="TreeGrafter"/>
</dbReference>
<dbReference type="GO" id="GO:0006096">
    <property type="term" value="P:glycolytic process"/>
    <property type="evidence" value="ECO:0007669"/>
    <property type="project" value="UniProtKB-UniRule"/>
</dbReference>
<dbReference type="CDD" id="cd00318">
    <property type="entry name" value="Phosphoglycerate_kinase"/>
    <property type="match status" value="1"/>
</dbReference>
<dbReference type="FunFam" id="3.40.50.1260:FF:000006">
    <property type="entry name" value="Phosphoglycerate kinase"/>
    <property type="match status" value="1"/>
</dbReference>
<dbReference type="FunFam" id="3.40.50.1260:FF:000031">
    <property type="entry name" value="Phosphoglycerate kinase 1"/>
    <property type="match status" value="1"/>
</dbReference>
<dbReference type="Gene3D" id="3.40.50.1260">
    <property type="entry name" value="Phosphoglycerate kinase, N-terminal domain"/>
    <property type="match status" value="2"/>
</dbReference>
<dbReference type="HAMAP" id="MF_00145">
    <property type="entry name" value="Phosphoglyc_kinase"/>
    <property type="match status" value="1"/>
</dbReference>
<dbReference type="InterPro" id="IPR001576">
    <property type="entry name" value="Phosphoglycerate_kinase"/>
</dbReference>
<dbReference type="InterPro" id="IPR015911">
    <property type="entry name" value="Phosphoglycerate_kinase_CS"/>
</dbReference>
<dbReference type="InterPro" id="IPR015824">
    <property type="entry name" value="Phosphoglycerate_kinase_N"/>
</dbReference>
<dbReference type="InterPro" id="IPR036043">
    <property type="entry name" value="Phosphoglycerate_kinase_sf"/>
</dbReference>
<dbReference type="PANTHER" id="PTHR11406">
    <property type="entry name" value="PHOSPHOGLYCERATE KINASE"/>
    <property type="match status" value="1"/>
</dbReference>
<dbReference type="PANTHER" id="PTHR11406:SF23">
    <property type="entry name" value="PHOSPHOGLYCERATE KINASE 1, CHLOROPLASTIC-RELATED"/>
    <property type="match status" value="1"/>
</dbReference>
<dbReference type="Pfam" id="PF00162">
    <property type="entry name" value="PGK"/>
    <property type="match status" value="1"/>
</dbReference>
<dbReference type="PIRSF" id="PIRSF000724">
    <property type="entry name" value="Pgk"/>
    <property type="match status" value="1"/>
</dbReference>
<dbReference type="PRINTS" id="PR00477">
    <property type="entry name" value="PHGLYCKINASE"/>
</dbReference>
<dbReference type="SUPFAM" id="SSF53748">
    <property type="entry name" value="Phosphoglycerate kinase"/>
    <property type="match status" value="1"/>
</dbReference>
<dbReference type="PROSITE" id="PS00111">
    <property type="entry name" value="PGLYCERATE_KINASE"/>
    <property type="match status" value="1"/>
</dbReference>
<proteinExistence type="inferred from homology"/>
<feature type="chain" id="PRO_1000192857" description="Phosphoglycerate kinase">
    <location>
        <begin position="1"/>
        <end position="392"/>
    </location>
</feature>
<feature type="binding site" evidence="1">
    <location>
        <begin position="19"/>
        <end position="21"/>
    </location>
    <ligand>
        <name>substrate</name>
    </ligand>
</feature>
<feature type="binding site" evidence="1">
    <location>
        <position position="34"/>
    </location>
    <ligand>
        <name>substrate</name>
    </ligand>
</feature>
<feature type="binding site" evidence="1">
    <location>
        <begin position="57"/>
        <end position="60"/>
    </location>
    <ligand>
        <name>substrate</name>
    </ligand>
</feature>
<feature type="binding site" evidence="1">
    <location>
        <position position="116"/>
    </location>
    <ligand>
        <name>substrate</name>
    </ligand>
</feature>
<feature type="binding site" evidence="1">
    <location>
        <position position="149"/>
    </location>
    <ligand>
        <name>substrate</name>
    </ligand>
</feature>
<feature type="binding site" evidence="1">
    <location>
        <position position="199"/>
    </location>
    <ligand>
        <name>ATP</name>
        <dbReference type="ChEBI" id="CHEBI:30616"/>
    </ligand>
</feature>
<feature type="binding site" evidence="1">
    <location>
        <position position="321"/>
    </location>
    <ligand>
        <name>ATP</name>
        <dbReference type="ChEBI" id="CHEBI:30616"/>
    </ligand>
</feature>
<feature type="binding site" evidence="1">
    <location>
        <begin position="347"/>
        <end position="350"/>
    </location>
    <ligand>
        <name>ATP</name>
        <dbReference type="ChEBI" id="CHEBI:30616"/>
    </ligand>
</feature>
<keyword id="KW-0067">ATP-binding</keyword>
<keyword id="KW-0963">Cytoplasm</keyword>
<keyword id="KW-0324">Glycolysis</keyword>
<keyword id="KW-0418">Kinase</keyword>
<keyword id="KW-0547">Nucleotide-binding</keyword>
<keyword id="KW-1185">Reference proteome</keyword>
<keyword id="KW-0808">Transferase</keyword>
<sequence>MRTVRDLEVEERRVLVRVDYNVPLEGGRVVDDTRIRATLPTLQWLLERRARIILCSHLGRPKGQVREELRLAPVAATLSGLLGQPVRSVRDIVGPEAQEMARRLQPGEVGMLENLRFDPREEQNDAEFAAALAALADCYVNDAFGAAHRAHASVVAVARLLPSAAGFLMEREVQALERVLRSDERPFVLVLGGAKVSDKIGVIENLLPRADALLLGGGMANTFLRARGLETGRSLVEEEKVPEAQRILDLAAARGVRVELPRDVVVAPTMSAVSQRRIVPVTAIPPDQAVYDIGPETVRAYSAVIAGARLLVWNGPMGVYEVPEFREGTKGIAEAVAGCSGFTLVGGGDSAAALQELGLAERVGHLSTGGGATLEYLEGRELPGVAVLMEEA</sequence>
<reference key="1">
    <citation type="journal article" date="2009" name="PLoS ONE">
        <title>Complete genome sequence of the aerobic CO-oxidizing thermophile Thermomicrobium roseum.</title>
        <authorList>
            <person name="Wu D."/>
            <person name="Raymond J."/>
            <person name="Wu M."/>
            <person name="Chatterji S."/>
            <person name="Ren Q."/>
            <person name="Graham J.E."/>
            <person name="Bryant D.A."/>
            <person name="Robb F."/>
            <person name="Colman A."/>
            <person name="Tallon L.J."/>
            <person name="Badger J.H."/>
            <person name="Madupu R."/>
            <person name="Ward N.L."/>
            <person name="Eisen J.A."/>
        </authorList>
    </citation>
    <scope>NUCLEOTIDE SEQUENCE [LARGE SCALE GENOMIC DNA]</scope>
    <source>
        <strain>ATCC 27502 / DSM 5159 / P-2</strain>
    </source>
</reference>
<organism>
    <name type="scientific">Thermomicrobium roseum (strain ATCC 27502 / DSM 5159 / P-2)</name>
    <dbReference type="NCBI Taxonomy" id="309801"/>
    <lineage>
        <taxon>Bacteria</taxon>
        <taxon>Pseudomonadati</taxon>
        <taxon>Thermomicrobiota</taxon>
        <taxon>Thermomicrobia</taxon>
        <taxon>Thermomicrobiales</taxon>
        <taxon>Thermomicrobiaceae</taxon>
        <taxon>Thermomicrobium</taxon>
    </lineage>
</organism>
<comment type="catalytic activity">
    <reaction evidence="1">
        <text>(2R)-3-phosphoglycerate + ATP = (2R)-3-phospho-glyceroyl phosphate + ADP</text>
        <dbReference type="Rhea" id="RHEA:14801"/>
        <dbReference type="ChEBI" id="CHEBI:30616"/>
        <dbReference type="ChEBI" id="CHEBI:57604"/>
        <dbReference type="ChEBI" id="CHEBI:58272"/>
        <dbReference type="ChEBI" id="CHEBI:456216"/>
        <dbReference type="EC" id="2.7.2.3"/>
    </reaction>
</comment>
<comment type="pathway">
    <text evidence="1">Carbohydrate degradation; glycolysis; pyruvate from D-glyceraldehyde 3-phosphate: step 2/5.</text>
</comment>
<comment type="subunit">
    <text evidence="1">Monomer.</text>
</comment>
<comment type="subcellular location">
    <subcellularLocation>
        <location evidence="1">Cytoplasm</location>
    </subcellularLocation>
</comment>
<comment type="similarity">
    <text evidence="1">Belongs to the phosphoglycerate kinase family.</text>
</comment>
<name>PGK_THERP</name>